<comment type="function">
    <text evidence="1">Specifically methylates guanosine-37 in various tRNAs.</text>
</comment>
<comment type="catalytic activity">
    <reaction evidence="1">
        <text>guanosine(37) in tRNA + S-adenosyl-L-methionine = N(1)-methylguanosine(37) in tRNA + S-adenosyl-L-homocysteine + H(+)</text>
        <dbReference type="Rhea" id="RHEA:36899"/>
        <dbReference type="Rhea" id="RHEA-COMP:10145"/>
        <dbReference type="Rhea" id="RHEA-COMP:10147"/>
        <dbReference type="ChEBI" id="CHEBI:15378"/>
        <dbReference type="ChEBI" id="CHEBI:57856"/>
        <dbReference type="ChEBI" id="CHEBI:59789"/>
        <dbReference type="ChEBI" id="CHEBI:73542"/>
        <dbReference type="ChEBI" id="CHEBI:74269"/>
        <dbReference type="EC" id="2.1.1.228"/>
    </reaction>
</comment>
<comment type="subunit">
    <text evidence="1">Homodimer.</text>
</comment>
<comment type="subcellular location">
    <subcellularLocation>
        <location evidence="1">Cytoplasm</location>
    </subcellularLocation>
</comment>
<comment type="similarity">
    <text evidence="1">Belongs to the RNA methyltransferase TrmD family.</text>
</comment>
<accession>Q3AC72</accession>
<feature type="chain" id="PRO_0000257400" description="tRNA (guanine-N(1)-)-methyltransferase">
    <location>
        <begin position="1"/>
        <end position="253"/>
    </location>
</feature>
<feature type="binding site" evidence="1">
    <location>
        <position position="110"/>
    </location>
    <ligand>
        <name>S-adenosyl-L-methionine</name>
        <dbReference type="ChEBI" id="CHEBI:59789"/>
    </ligand>
</feature>
<feature type="binding site" evidence="1">
    <location>
        <begin position="130"/>
        <end position="135"/>
    </location>
    <ligand>
        <name>S-adenosyl-L-methionine</name>
        <dbReference type="ChEBI" id="CHEBI:59789"/>
    </ligand>
</feature>
<protein>
    <recommendedName>
        <fullName evidence="1">tRNA (guanine-N(1)-)-methyltransferase</fullName>
        <ecNumber evidence="1">2.1.1.228</ecNumber>
    </recommendedName>
    <alternativeName>
        <fullName evidence="1">M1G-methyltransferase</fullName>
    </alternativeName>
    <alternativeName>
        <fullName evidence="1">tRNA [GM37] methyltransferase</fullName>
    </alternativeName>
</protein>
<dbReference type="EC" id="2.1.1.228" evidence="1"/>
<dbReference type="EMBL" id="CP000141">
    <property type="protein sequence ID" value="ABB16148.1"/>
    <property type="molecule type" value="Genomic_DNA"/>
</dbReference>
<dbReference type="RefSeq" id="WP_011344337.1">
    <property type="nucleotide sequence ID" value="NC_007503.1"/>
</dbReference>
<dbReference type="SMR" id="Q3AC72"/>
<dbReference type="FunCoup" id="Q3AC72">
    <property type="interactions" value="406"/>
</dbReference>
<dbReference type="STRING" id="246194.CHY_1430"/>
<dbReference type="KEGG" id="chy:CHY_1430"/>
<dbReference type="eggNOG" id="COG0336">
    <property type="taxonomic scope" value="Bacteria"/>
</dbReference>
<dbReference type="HOGENOM" id="CLU_047363_0_1_9"/>
<dbReference type="InParanoid" id="Q3AC72"/>
<dbReference type="OrthoDB" id="9807416at2"/>
<dbReference type="Proteomes" id="UP000002706">
    <property type="component" value="Chromosome"/>
</dbReference>
<dbReference type="GO" id="GO:0005829">
    <property type="term" value="C:cytosol"/>
    <property type="evidence" value="ECO:0007669"/>
    <property type="project" value="TreeGrafter"/>
</dbReference>
<dbReference type="GO" id="GO:0052906">
    <property type="term" value="F:tRNA (guanine(37)-N1)-methyltransferase activity"/>
    <property type="evidence" value="ECO:0007669"/>
    <property type="project" value="UniProtKB-UniRule"/>
</dbReference>
<dbReference type="GO" id="GO:0002939">
    <property type="term" value="P:tRNA N1-guanine methylation"/>
    <property type="evidence" value="ECO:0007669"/>
    <property type="project" value="TreeGrafter"/>
</dbReference>
<dbReference type="CDD" id="cd18080">
    <property type="entry name" value="TrmD-like"/>
    <property type="match status" value="1"/>
</dbReference>
<dbReference type="FunFam" id="1.10.1270.20:FF:000001">
    <property type="entry name" value="tRNA (guanine-N(1)-)-methyltransferase"/>
    <property type="match status" value="1"/>
</dbReference>
<dbReference type="FunFam" id="3.40.1280.10:FF:000001">
    <property type="entry name" value="tRNA (guanine-N(1)-)-methyltransferase"/>
    <property type="match status" value="1"/>
</dbReference>
<dbReference type="Gene3D" id="3.40.1280.10">
    <property type="match status" value="1"/>
</dbReference>
<dbReference type="Gene3D" id="1.10.1270.20">
    <property type="entry name" value="tRNA(m1g37)methyltransferase, domain 2"/>
    <property type="match status" value="1"/>
</dbReference>
<dbReference type="HAMAP" id="MF_00605">
    <property type="entry name" value="TrmD"/>
    <property type="match status" value="1"/>
</dbReference>
<dbReference type="InterPro" id="IPR029028">
    <property type="entry name" value="Alpha/beta_knot_MTases"/>
</dbReference>
<dbReference type="InterPro" id="IPR023148">
    <property type="entry name" value="tRNA_m1G_MeTrfase_C_sf"/>
</dbReference>
<dbReference type="InterPro" id="IPR002649">
    <property type="entry name" value="tRNA_m1G_MeTrfase_TrmD"/>
</dbReference>
<dbReference type="InterPro" id="IPR029026">
    <property type="entry name" value="tRNA_m1G_MTases_N"/>
</dbReference>
<dbReference type="InterPro" id="IPR016009">
    <property type="entry name" value="tRNA_MeTrfase_TRMD/TRM10"/>
</dbReference>
<dbReference type="NCBIfam" id="NF000648">
    <property type="entry name" value="PRK00026.1"/>
    <property type="match status" value="1"/>
</dbReference>
<dbReference type="NCBIfam" id="TIGR00088">
    <property type="entry name" value="trmD"/>
    <property type="match status" value="1"/>
</dbReference>
<dbReference type="PANTHER" id="PTHR46417">
    <property type="entry name" value="TRNA (GUANINE-N(1)-)-METHYLTRANSFERASE"/>
    <property type="match status" value="1"/>
</dbReference>
<dbReference type="PANTHER" id="PTHR46417:SF1">
    <property type="entry name" value="TRNA (GUANINE-N(1)-)-METHYLTRANSFERASE"/>
    <property type="match status" value="1"/>
</dbReference>
<dbReference type="Pfam" id="PF01746">
    <property type="entry name" value="tRNA_m1G_MT"/>
    <property type="match status" value="1"/>
</dbReference>
<dbReference type="PIRSF" id="PIRSF000386">
    <property type="entry name" value="tRNA_mtase"/>
    <property type="match status" value="1"/>
</dbReference>
<dbReference type="SUPFAM" id="SSF75217">
    <property type="entry name" value="alpha/beta knot"/>
    <property type="match status" value="1"/>
</dbReference>
<keyword id="KW-0963">Cytoplasm</keyword>
<keyword id="KW-0489">Methyltransferase</keyword>
<keyword id="KW-1185">Reference proteome</keyword>
<keyword id="KW-0949">S-adenosyl-L-methionine</keyword>
<keyword id="KW-0808">Transferase</keyword>
<keyword id="KW-0819">tRNA processing</keyword>
<organism>
    <name type="scientific">Carboxydothermus hydrogenoformans (strain ATCC BAA-161 / DSM 6008 / Z-2901)</name>
    <dbReference type="NCBI Taxonomy" id="246194"/>
    <lineage>
        <taxon>Bacteria</taxon>
        <taxon>Bacillati</taxon>
        <taxon>Bacillota</taxon>
        <taxon>Clostridia</taxon>
        <taxon>Thermoanaerobacterales</taxon>
        <taxon>Thermoanaerobacteraceae</taxon>
        <taxon>Carboxydothermus</taxon>
    </lineage>
</organism>
<sequence>MKIDILTLFPEMFYGPLNSSILKKAQEKGIITINYINIRDFTTDRHHQADDKPYGGGAGMVMKVEPIIKAYEAIPKNNSFTIMLSPQGRKFNQKLARELSQKEHLIFICGHYEGIDERVRQLIVDEEISIGDYILTGGEIAAMVIIDAVARLVPGVLGDEVSAEEESFSDQLLEYPHYTRPRNFRGLEVPEVLLSGNHKKIDLWRKKQSLLNTLFRRRDLLKVRGLTKEEKILLWQGFFELAMLIDEIPERSE</sequence>
<name>TRMD_CARHZ</name>
<gene>
    <name evidence="1" type="primary">trmD</name>
    <name type="ordered locus">CHY_1430</name>
</gene>
<reference key="1">
    <citation type="journal article" date="2005" name="PLoS Genet.">
        <title>Life in hot carbon monoxide: the complete genome sequence of Carboxydothermus hydrogenoformans Z-2901.</title>
        <authorList>
            <person name="Wu M."/>
            <person name="Ren Q."/>
            <person name="Durkin A.S."/>
            <person name="Daugherty S.C."/>
            <person name="Brinkac L.M."/>
            <person name="Dodson R.J."/>
            <person name="Madupu R."/>
            <person name="Sullivan S.A."/>
            <person name="Kolonay J.F."/>
            <person name="Nelson W.C."/>
            <person name="Tallon L.J."/>
            <person name="Jones K.M."/>
            <person name="Ulrich L.E."/>
            <person name="Gonzalez J.M."/>
            <person name="Zhulin I.B."/>
            <person name="Robb F.T."/>
            <person name="Eisen J.A."/>
        </authorList>
    </citation>
    <scope>NUCLEOTIDE SEQUENCE [LARGE SCALE GENOMIC DNA]</scope>
    <source>
        <strain>ATCC BAA-161 / DSM 6008 / Z-2901</strain>
    </source>
</reference>
<evidence type="ECO:0000255" key="1">
    <source>
        <dbReference type="HAMAP-Rule" id="MF_00605"/>
    </source>
</evidence>
<proteinExistence type="inferred from homology"/>